<keyword id="KW-1185">Reference proteome</keyword>
<feature type="chain" id="PRO_0000384039" description="Lactate utilization protein A">
    <location>
        <begin position="1"/>
        <end position="244"/>
    </location>
</feature>
<proteinExistence type="inferred from homology"/>
<gene>
    <name evidence="1" type="primary">lutA</name>
    <name type="ordered locus">BH1832</name>
</gene>
<evidence type="ECO:0000255" key="1">
    <source>
        <dbReference type="HAMAP-Rule" id="MF_02105"/>
    </source>
</evidence>
<dbReference type="EMBL" id="BA000004">
    <property type="protein sequence ID" value="BAB05551.1"/>
    <property type="molecule type" value="Genomic_DNA"/>
</dbReference>
<dbReference type="PIR" id="H83878">
    <property type="entry name" value="H83878"/>
</dbReference>
<dbReference type="RefSeq" id="WP_010897993.1">
    <property type="nucleotide sequence ID" value="NC_002570.2"/>
</dbReference>
<dbReference type="SMR" id="Q9KBU2"/>
<dbReference type="STRING" id="272558.gene:10727730"/>
<dbReference type="KEGG" id="bha:BH1832"/>
<dbReference type="eggNOG" id="COG0247">
    <property type="taxonomic scope" value="Bacteria"/>
</dbReference>
<dbReference type="HOGENOM" id="CLU_023081_1_0_9"/>
<dbReference type="OrthoDB" id="9770306at2"/>
<dbReference type="Proteomes" id="UP000001258">
    <property type="component" value="Chromosome"/>
</dbReference>
<dbReference type="GO" id="GO:0005829">
    <property type="term" value="C:cytosol"/>
    <property type="evidence" value="ECO:0007669"/>
    <property type="project" value="TreeGrafter"/>
</dbReference>
<dbReference type="GO" id="GO:0016491">
    <property type="term" value="F:oxidoreductase activity"/>
    <property type="evidence" value="ECO:0007669"/>
    <property type="project" value="UniProtKB-ARBA"/>
</dbReference>
<dbReference type="GO" id="GO:0006089">
    <property type="term" value="P:lactate metabolic process"/>
    <property type="evidence" value="ECO:0007669"/>
    <property type="project" value="UniProtKB-UniRule"/>
</dbReference>
<dbReference type="HAMAP" id="MF_02105">
    <property type="entry name" value="LutA"/>
    <property type="match status" value="1"/>
</dbReference>
<dbReference type="InterPro" id="IPR004017">
    <property type="entry name" value="Cys_rich_dom"/>
</dbReference>
<dbReference type="InterPro" id="IPR022822">
    <property type="entry name" value="LutA"/>
</dbReference>
<dbReference type="PANTHER" id="PTHR30296:SF0">
    <property type="entry name" value="LACTATE UTILIZATION PROTEIN A"/>
    <property type="match status" value="1"/>
</dbReference>
<dbReference type="PANTHER" id="PTHR30296">
    <property type="entry name" value="UNCHARACTERIZED PROTEIN YKGE"/>
    <property type="match status" value="1"/>
</dbReference>
<dbReference type="Pfam" id="PF02754">
    <property type="entry name" value="CCG"/>
    <property type="match status" value="2"/>
</dbReference>
<name>LUTA_HALH5</name>
<protein>
    <recommendedName>
        <fullName evidence="1">Lactate utilization protein A</fullName>
    </recommendedName>
</protein>
<organism>
    <name type="scientific">Halalkalibacterium halodurans (strain ATCC BAA-125 / DSM 18197 / FERM 7344 / JCM 9153 / C-125)</name>
    <name type="common">Bacillus halodurans</name>
    <dbReference type="NCBI Taxonomy" id="272558"/>
    <lineage>
        <taxon>Bacteria</taxon>
        <taxon>Bacillati</taxon>
        <taxon>Bacillota</taxon>
        <taxon>Bacilli</taxon>
        <taxon>Bacillales</taxon>
        <taxon>Bacillaceae</taxon>
        <taxon>Halalkalibacterium (ex Joshi et al. 2022)</taxon>
    </lineage>
</organism>
<accession>Q9KBU2</accession>
<sequence>MKVSLFITCLADVFYPDVGRHTVELLERYGCEVEFPEQQTCCGQPAYNSGYHRDTKKVAKHMIETFARAEYVVSPSGSCVAMFHEYEELLKDEPVWQERAKKLVAKTYELSQFLVNVLKVKEVHSSLQAKATYHTSCHMTRLLGETQSPFDLLEKVEGLQLEELPNRETCCGFGGTFSVKMTPISEQMVDEKVRHIEETGADVLIGADCGCLMNIGGRIQRKGKPIKMMHLAEVLNHQERTREE</sequence>
<reference key="1">
    <citation type="journal article" date="2000" name="Nucleic Acids Res.">
        <title>Complete genome sequence of the alkaliphilic bacterium Bacillus halodurans and genomic sequence comparison with Bacillus subtilis.</title>
        <authorList>
            <person name="Takami H."/>
            <person name="Nakasone K."/>
            <person name="Takaki Y."/>
            <person name="Maeno G."/>
            <person name="Sasaki R."/>
            <person name="Masui N."/>
            <person name="Fuji F."/>
            <person name="Hirama C."/>
            <person name="Nakamura Y."/>
            <person name="Ogasawara N."/>
            <person name="Kuhara S."/>
            <person name="Horikoshi K."/>
        </authorList>
    </citation>
    <scope>NUCLEOTIDE SEQUENCE [LARGE SCALE GENOMIC DNA]</scope>
    <source>
        <strain>ATCC BAA-125 / DSM 18197 / FERM 7344 / JCM 9153 / C-125</strain>
    </source>
</reference>
<comment type="function">
    <text evidence="1">Is involved in L-lactate degradation and allows cells to grow with lactate as the sole carbon source.</text>
</comment>
<comment type="similarity">
    <text evidence="1">Belongs to the LutA/YkgE family.</text>
</comment>